<dbReference type="EC" id="2.4.2.3" evidence="2 3 4"/>
<dbReference type="EMBL" id="D44464">
    <property type="protein sequence ID" value="BAA07916.1"/>
    <property type="molecule type" value="mRNA"/>
</dbReference>
<dbReference type="EMBL" id="BC036559">
    <property type="protein sequence ID" value="AAH36559.1"/>
    <property type="molecule type" value="mRNA"/>
</dbReference>
<dbReference type="CCDS" id="CCDS24432.1"/>
<dbReference type="PIR" id="A57501">
    <property type="entry name" value="A57501"/>
</dbReference>
<dbReference type="RefSeq" id="NP_001152873.1">
    <property type="nucleotide sequence ID" value="NM_001159401.1"/>
</dbReference>
<dbReference type="RefSeq" id="NP_001152874.1">
    <property type="nucleotide sequence ID" value="NM_001159402.1"/>
</dbReference>
<dbReference type="RefSeq" id="NP_033503.2">
    <property type="nucleotide sequence ID" value="NM_009477.3"/>
</dbReference>
<dbReference type="RefSeq" id="XP_006514730.1">
    <property type="nucleotide sequence ID" value="XM_006514667.3"/>
</dbReference>
<dbReference type="SMR" id="P52624"/>
<dbReference type="FunCoup" id="P52624">
    <property type="interactions" value="689"/>
</dbReference>
<dbReference type="STRING" id="10090.ENSMUSP00000020677"/>
<dbReference type="BindingDB" id="P52624"/>
<dbReference type="ChEMBL" id="CHEMBL3718"/>
<dbReference type="PhosphoSitePlus" id="P52624"/>
<dbReference type="SwissPalm" id="P52624"/>
<dbReference type="jPOST" id="P52624"/>
<dbReference type="PaxDb" id="10090-ENSMUSP00000020677"/>
<dbReference type="PeptideAtlas" id="P52624"/>
<dbReference type="ProteomicsDB" id="298204"/>
<dbReference type="Antibodypedia" id="27594">
    <property type="antibodies" value="164 antibodies from 25 providers"/>
</dbReference>
<dbReference type="DNASU" id="22271"/>
<dbReference type="Ensembl" id="ENSMUST00000020677.8">
    <property type="protein sequence ID" value="ENSMUSP00000020677.2"/>
    <property type="gene ID" value="ENSMUSG00000020407.14"/>
</dbReference>
<dbReference type="Ensembl" id="ENSMUST00000101525.9">
    <property type="protein sequence ID" value="ENSMUSP00000099063.3"/>
    <property type="gene ID" value="ENSMUSG00000020407.14"/>
</dbReference>
<dbReference type="Ensembl" id="ENSMUST00000164791.8">
    <property type="protein sequence ID" value="ENSMUSP00000127473.2"/>
    <property type="gene ID" value="ENSMUSG00000020407.14"/>
</dbReference>
<dbReference type="GeneID" id="22271"/>
<dbReference type="KEGG" id="mmu:22271"/>
<dbReference type="UCSC" id="uc007hzw.2">
    <property type="organism name" value="mouse"/>
</dbReference>
<dbReference type="AGR" id="MGI:1097668"/>
<dbReference type="CTD" id="7378"/>
<dbReference type="MGI" id="MGI:1097668">
    <property type="gene designation" value="Upp1"/>
</dbReference>
<dbReference type="VEuPathDB" id="HostDB:ENSMUSG00000020407"/>
<dbReference type="eggNOG" id="KOG3728">
    <property type="taxonomic scope" value="Eukaryota"/>
</dbReference>
<dbReference type="GeneTree" id="ENSGT00940000157781"/>
<dbReference type="HOGENOM" id="CLU_054104_0_0_1"/>
<dbReference type="InParanoid" id="P52624"/>
<dbReference type="OMA" id="HPNICAG"/>
<dbReference type="OrthoDB" id="204058at2759"/>
<dbReference type="PhylomeDB" id="P52624"/>
<dbReference type="TreeFam" id="TF314310"/>
<dbReference type="Reactome" id="R-MMU-73614">
    <property type="pathway name" value="Pyrimidine salvage"/>
</dbReference>
<dbReference type="Reactome" id="R-MMU-73621">
    <property type="pathway name" value="Pyrimidine catabolism"/>
</dbReference>
<dbReference type="UniPathway" id="UPA00574">
    <property type="reaction ID" value="UER00633"/>
</dbReference>
<dbReference type="BioGRID-ORCS" id="22271">
    <property type="hits" value="2 hits in 77 CRISPR screens"/>
</dbReference>
<dbReference type="ChiTaRS" id="Upp1">
    <property type="organism name" value="mouse"/>
</dbReference>
<dbReference type="PRO" id="PR:P52624"/>
<dbReference type="Proteomes" id="UP000000589">
    <property type="component" value="Chromosome 11"/>
</dbReference>
<dbReference type="RNAct" id="P52624">
    <property type="molecule type" value="protein"/>
</dbReference>
<dbReference type="Bgee" id="ENSMUSG00000020407">
    <property type="expression patterns" value="Expressed in ectoplacental cone and 151 other cell types or tissues"/>
</dbReference>
<dbReference type="ExpressionAtlas" id="P52624">
    <property type="expression patterns" value="baseline and differential"/>
</dbReference>
<dbReference type="GO" id="GO:0005829">
    <property type="term" value="C:cytosol"/>
    <property type="evidence" value="ECO:0000314"/>
    <property type="project" value="MGI"/>
</dbReference>
<dbReference type="GO" id="GO:0005654">
    <property type="term" value="C:nucleoplasm"/>
    <property type="evidence" value="ECO:0007669"/>
    <property type="project" value="Ensembl"/>
</dbReference>
<dbReference type="GO" id="GO:0047847">
    <property type="term" value="F:deoxyuridine phosphorylase activity"/>
    <property type="evidence" value="ECO:0000314"/>
    <property type="project" value="MGI"/>
</dbReference>
<dbReference type="GO" id="GO:0042802">
    <property type="term" value="F:identical protein binding"/>
    <property type="evidence" value="ECO:0000250"/>
    <property type="project" value="UniProtKB"/>
</dbReference>
<dbReference type="GO" id="GO:0009032">
    <property type="term" value="F:thymidine phosphorylase activity"/>
    <property type="evidence" value="ECO:0000315"/>
    <property type="project" value="MGI"/>
</dbReference>
<dbReference type="GO" id="GO:0004850">
    <property type="term" value="F:uridine phosphorylase activity"/>
    <property type="evidence" value="ECO:0000314"/>
    <property type="project" value="UniProtKB"/>
</dbReference>
<dbReference type="GO" id="GO:0042149">
    <property type="term" value="P:cellular response to glucose starvation"/>
    <property type="evidence" value="ECO:0007669"/>
    <property type="project" value="Ensembl"/>
</dbReference>
<dbReference type="GO" id="GO:0006248">
    <property type="term" value="P:CMP catabolic process"/>
    <property type="evidence" value="ECO:0000314"/>
    <property type="project" value="MGI"/>
</dbReference>
<dbReference type="GO" id="GO:0006249">
    <property type="term" value="P:dCMP catabolic process"/>
    <property type="evidence" value="ECO:0000314"/>
    <property type="project" value="MGI"/>
</dbReference>
<dbReference type="GO" id="GO:0046074">
    <property type="term" value="P:dTMP catabolic process"/>
    <property type="evidence" value="ECO:0000315"/>
    <property type="project" value="MGI"/>
</dbReference>
<dbReference type="GO" id="GO:0046079">
    <property type="term" value="P:dUMP catabolic process"/>
    <property type="evidence" value="ECO:0000314"/>
    <property type="project" value="MGI"/>
</dbReference>
<dbReference type="GO" id="GO:0006220">
    <property type="term" value="P:pyrimidine nucleotide metabolic process"/>
    <property type="evidence" value="ECO:0000315"/>
    <property type="project" value="MGI"/>
</dbReference>
<dbReference type="GO" id="GO:0046050">
    <property type="term" value="P:UMP catabolic process"/>
    <property type="evidence" value="ECO:0000314"/>
    <property type="project" value="MGI"/>
</dbReference>
<dbReference type="GO" id="GO:0044206">
    <property type="term" value="P:UMP salvage"/>
    <property type="evidence" value="ECO:0000315"/>
    <property type="project" value="MGI"/>
</dbReference>
<dbReference type="GO" id="GO:0006218">
    <property type="term" value="P:uridine catabolic process"/>
    <property type="evidence" value="ECO:0000314"/>
    <property type="project" value="UniProtKB"/>
</dbReference>
<dbReference type="GO" id="GO:0046108">
    <property type="term" value="P:uridine metabolic process"/>
    <property type="evidence" value="ECO:0000315"/>
    <property type="project" value="MGI"/>
</dbReference>
<dbReference type="CDD" id="cd17763">
    <property type="entry name" value="UP_hUPP-like"/>
    <property type="match status" value="1"/>
</dbReference>
<dbReference type="FunFam" id="3.40.50.1580:FF:000009">
    <property type="entry name" value="Uridine phosphorylase 2"/>
    <property type="match status" value="1"/>
</dbReference>
<dbReference type="Gene3D" id="3.40.50.1580">
    <property type="entry name" value="Nucleoside phosphorylase domain"/>
    <property type="match status" value="1"/>
</dbReference>
<dbReference type="InterPro" id="IPR018016">
    <property type="entry name" value="Nucleoside_phosphorylase_CS"/>
</dbReference>
<dbReference type="InterPro" id="IPR000845">
    <property type="entry name" value="Nucleoside_phosphorylase_d"/>
</dbReference>
<dbReference type="InterPro" id="IPR035994">
    <property type="entry name" value="Nucleoside_phosphorylase_sf"/>
</dbReference>
<dbReference type="InterPro" id="IPR010059">
    <property type="entry name" value="Uridine_phosphorylase_euk"/>
</dbReference>
<dbReference type="NCBIfam" id="TIGR01719">
    <property type="entry name" value="euk_UDPppase"/>
    <property type="match status" value="1"/>
</dbReference>
<dbReference type="PANTHER" id="PTHR43691">
    <property type="entry name" value="URIDINE PHOSPHORYLASE"/>
    <property type="match status" value="1"/>
</dbReference>
<dbReference type="PANTHER" id="PTHR43691:SF10">
    <property type="entry name" value="URIDINE PHOSPHORYLASE 1"/>
    <property type="match status" value="1"/>
</dbReference>
<dbReference type="Pfam" id="PF01048">
    <property type="entry name" value="PNP_UDP_1"/>
    <property type="match status" value="1"/>
</dbReference>
<dbReference type="SUPFAM" id="SSF53167">
    <property type="entry name" value="Purine and uridine phosphorylases"/>
    <property type="match status" value="1"/>
</dbReference>
<dbReference type="PROSITE" id="PS01232">
    <property type="entry name" value="PNP_UDP_1"/>
    <property type="match status" value="1"/>
</dbReference>
<reference key="1">
    <citation type="journal article" date="1995" name="J. Biol. Chem.">
        <title>Purification, cloning, and expression of murine uridine phosphorylase.</title>
        <authorList>
            <person name="Watanabe S."/>
            <person name="Hino A."/>
            <person name="Wada K."/>
            <person name="Eliason J.F."/>
            <person name="Uchida T."/>
        </authorList>
    </citation>
    <scope>NUCLEOTIDE SEQUENCE [MRNA]</scope>
    <scope>PROTEIN SEQUENCE OF 67-86 AND 277-293</scope>
    <scope>FUNCTION</scope>
    <scope>CATALYTIC ACTIVITY</scope>
    <scope>ACTIVITY REGULATION</scope>
    <scope>BIOPHYSICOCHEMICAL PROPERTIES</scope>
    <scope>INDUCTION</scope>
    <source>
        <strain>BALB/cJ</strain>
    </source>
</reference>
<reference key="2">
    <citation type="journal article" date="2004" name="Genome Res.">
        <title>The status, quality, and expansion of the NIH full-length cDNA project: the Mammalian Gene Collection (MGC).</title>
        <authorList>
            <consortium name="The MGC Project Team"/>
        </authorList>
    </citation>
    <scope>NUCLEOTIDE SEQUENCE [LARGE SCALE MRNA]</scope>
    <source>
        <tissue>Lung</tissue>
    </source>
</reference>
<reference key="3">
    <citation type="journal article" date="2010" name="Cell">
        <title>A tissue-specific atlas of mouse protein phosphorylation and expression.</title>
        <authorList>
            <person name="Huttlin E.L."/>
            <person name="Jedrychowski M.P."/>
            <person name="Elias J.E."/>
            <person name="Goswami T."/>
            <person name="Rad R."/>
            <person name="Beausoleil S.A."/>
            <person name="Villen J."/>
            <person name="Haas W."/>
            <person name="Sowa M.E."/>
            <person name="Gygi S.P."/>
        </authorList>
    </citation>
    <scope>IDENTIFICATION BY MASS SPECTROMETRY [LARGE SCALE ANALYSIS]</scope>
    <source>
        <tissue>Kidney</tissue>
        <tissue>Lung</tissue>
    </source>
</reference>
<reference key="4">
    <citation type="journal article" date="2002" name="Mol. Cell. Biol.">
        <title>Targeted deletion of both thymidine phosphorylase and uridine phosphorylase and consequent disorders in mice.</title>
        <authorList>
            <person name="Haraguchi M."/>
            <person name="Tsujimoto H."/>
            <person name="Fukushima M."/>
            <person name="Higuchi I."/>
            <person name="Kuribayashi H."/>
            <person name="Utsumi H."/>
            <person name="Nakayama A."/>
            <person name="Hashizume Y."/>
            <person name="Hirato J."/>
            <person name="Yoshida H."/>
            <person name="Hara H."/>
            <person name="Hamano S."/>
            <person name="Kawaguchi H."/>
            <person name="Furukawa T."/>
            <person name="Miyazono K."/>
            <person name="Ishikawa F."/>
            <person name="Toyoshima H."/>
            <person name="Kaname T."/>
            <person name="Komatsu M."/>
            <person name="Chen Z.S."/>
            <person name="Gotanda T."/>
            <person name="Tachiwada T."/>
            <person name="Sumizawa T."/>
            <person name="Miyadera K."/>
            <person name="Osame M."/>
            <person name="Yoshida H."/>
            <person name="Noda T."/>
            <person name="Yamada Y."/>
            <person name="Akiyama S."/>
        </authorList>
    </citation>
    <scope>FUNCTION</scope>
    <scope>CATALYTIC ACTIVITY</scope>
    <scope>DISRUPTION PHENOTYPE</scope>
</reference>
<reference key="5">
    <citation type="journal article" date="2005" name="J. Biol. Chem.">
        <title>Abnormalities in uridine homeostatic regulation and pyrimidine nucleotide metabolism as a consequence of the deletion of the uridine phosphorylase gene.</title>
        <authorList>
            <person name="Cao D."/>
            <person name="Leffert J.J."/>
            <person name="McCabe J."/>
            <person name="Kim B."/>
            <person name="Pizzorno G."/>
        </authorList>
    </citation>
    <scope>FUNCTION</scope>
    <scope>CATALYTIC ACTIVITY</scope>
    <scope>DISRUPTION PHENOTYPE</scope>
</reference>
<comment type="function">
    <text evidence="2 3 4">Catalyzes the reversible phosphorylytic cleavage of uridine to uracil and ribose-1-phosphate which can then be utilized as carbon and energy sources or in the rescue of pyrimidine bases for nucleotide synthesis (PubMed:12077348, PubMed:15772079, PubMed:7744869). Shows broad substrate specificity and can also accept deoxyuridine and other analogous compounds (PubMed:12077348, PubMed:7744869).</text>
</comment>
<comment type="catalytic activity">
    <reaction evidence="2 3 4">
        <text>uridine + phosphate = alpha-D-ribose 1-phosphate + uracil</text>
        <dbReference type="Rhea" id="RHEA:24388"/>
        <dbReference type="ChEBI" id="CHEBI:16704"/>
        <dbReference type="ChEBI" id="CHEBI:17568"/>
        <dbReference type="ChEBI" id="CHEBI:43474"/>
        <dbReference type="ChEBI" id="CHEBI:57720"/>
        <dbReference type="EC" id="2.4.2.3"/>
    </reaction>
    <physiologicalReaction direction="left-to-right" evidence="2 3">
        <dbReference type="Rhea" id="RHEA:24389"/>
    </physiologicalReaction>
</comment>
<comment type="catalytic activity">
    <reaction evidence="6">
        <text>2'-deoxyuridine + phosphate = 2-deoxy-alpha-D-ribose 1-phosphate + uracil</text>
        <dbReference type="Rhea" id="RHEA:22824"/>
        <dbReference type="ChEBI" id="CHEBI:16450"/>
        <dbReference type="ChEBI" id="CHEBI:17568"/>
        <dbReference type="ChEBI" id="CHEBI:43474"/>
        <dbReference type="ChEBI" id="CHEBI:57259"/>
    </reaction>
    <physiologicalReaction direction="left-to-right" evidence="6">
        <dbReference type="Rhea" id="RHEA:22825"/>
    </physiologicalReaction>
</comment>
<comment type="activity regulation">
    <text evidence="4">Strongly inhibited by 2,2'-anhydro-5-ethyluridine, a competitive inhibitor.</text>
</comment>
<comment type="biophysicochemical properties">
    <kinetics>
        <KM evidence="4">64 uM for uridine</KM>
        <KM evidence="4">148 uM for thymidine</KM>
    </kinetics>
</comment>
<comment type="pathway">
    <text evidence="6">Pyrimidine metabolism; UMP biosynthesis via salvage pathway; uracil from uridine (phosphorylase route): step 1/1.</text>
</comment>
<comment type="subunit">
    <text evidence="1">Homodimer.</text>
</comment>
<comment type="induction">
    <text evidence="4">By a mixture of inflammatory cytokines: TNF-alpha, IL-1 and interferon gamma.</text>
</comment>
<comment type="PTM">
    <text>The N-terminus is blocked.</text>
</comment>
<comment type="disruption phenotype">
    <text evidence="2 3">Homozygous knockout mice are completely viable and show no changes in growth, development, sexual maturation, and fertility. There are no significant histological alterations present in the major organs including brain, lung, heart, liver, spleen, gut, and kidney (PubMed:15772079). However, uridine concentration increases by more than 6-fold in the plasma and in tissues and 24-fold in urine (PubMed:15772079). Moreover, pyrimidine nucleotide metabolism is more generally disturbed (PubMed:15772079). An effect on thymidine metabolism is not reproducibly observed (PubMed:12077348, PubMed:15772079).</text>
</comment>
<comment type="similarity">
    <text evidence="5">Belongs to the PNP/UDP phosphorylase family.</text>
</comment>
<sequence>MAATGTEAKDLENHHNDCFIQLSNPNIAAMKEDVLYHFNLSTSTHDFPAMFGDVKFVCVGGSSSRMNTFIKYVAAELGLDHPGKEYPNICAGTDRYAMYKAGPVLSVSHGMGIPSIGIMLHELIKMLYHARCSNITIIRIGTSGGIGLEPGSVVITQQAVNECFKPEFEQIVLGKRVIRNTNLDAQLVQELVQCSSDLNEFPMVVGNTMCTLDFYEGQGRLDGALCSYTEKDKQSYLRAAHAAGVRNIEMESSVFATMCSACGLKAAVVCVTLLDRLQGDQINTPHDVLVEYQQRPQRLVGHFIKKSLGRA</sequence>
<protein>
    <recommendedName>
        <fullName evidence="6">Uridine phosphorylase 1</fullName>
        <shortName>UPase 1</shortName>
        <shortName>UrdPase 1</shortName>
        <ecNumber evidence="2 3 4">2.4.2.3</ecNumber>
    </recommendedName>
</protein>
<organism>
    <name type="scientific">Mus musculus</name>
    <name type="common">Mouse</name>
    <dbReference type="NCBI Taxonomy" id="10090"/>
    <lineage>
        <taxon>Eukaryota</taxon>
        <taxon>Metazoa</taxon>
        <taxon>Chordata</taxon>
        <taxon>Craniata</taxon>
        <taxon>Vertebrata</taxon>
        <taxon>Euteleostomi</taxon>
        <taxon>Mammalia</taxon>
        <taxon>Eutheria</taxon>
        <taxon>Euarchontoglires</taxon>
        <taxon>Glires</taxon>
        <taxon>Rodentia</taxon>
        <taxon>Myomorpha</taxon>
        <taxon>Muroidea</taxon>
        <taxon>Muridae</taxon>
        <taxon>Murinae</taxon>
        <taxon>Mus</taxon>
        <taxon>Mus</taxon>
    </lineage>
</organism>
<evidence type="ECO:0000250" key="1">
    <source>
        <dbReference type="UniProtKB" id="Q16831"/>
    </source>
</evidence>
<evidence type="ECO:0000269" key="2">
    <source>
    </source>
</evidence>
<evidence type="ECO:0000269" key="3">
    <source>
    </source>
</evidence>
<evidence type="ECO:0000269" key="4">
    <source>
    </source>
</evidence>
<evidence type="ECO:0000305" key="5"/>
<evidence type="ECO:0000305" key="6">
    <source>
    </source>
</evidence>
<evidence type="ECO:0000312" key="7">
    <source>
        <dbReference type="MGI" id="MGI:1097668"/>
    </source>
</evidence>
<name>UPP1_MOUSE</name>
<proteinExistence type="evidence at protein level"/>
<gene>
    <name evidence="7" type="primary">Upp1</name>
    <name type="synonym">Up</name>
    <name type="synonym">Upp</name>
</gene>
<accession>P52624</accession>
<accession>Q8JZX0</accession>
<feature type="chain" id="PRO_0000063192" description="Uridine phosphorylase 1">
    <location>
        <begin position="1"/>
        <end position="311"/>
    </location>
</feature>
<feature type="binding site" evidence="1">
    <location>
        <position position="61"/>
    </location>
    <ligand>
        <name>phosphate</name>
        <dbReference type="ChEBI" id="CHEBI:43474"/>
    </ligand>
</feature>
<feature type="binding site" evidence="1">
    <location>
        <position position="95"/>
    </location>
    <ligand>
        <name>phosphate</name>
        <dbReference type="ChEBI" id="CHEBI:43474"/>
    </ligand>
</feature>
<feature type="binding site" evidence="1">
    <location>
        <begin position="139"/>
        <end position="142"/>
    </location>
    <ligand>
        <name>phosphate</name>
        <dbReference type="ChEBI" id="CHEBI:43474"/>
    </ligand>
</feature>
<feature type="binding site" evidence="1">
    <location>
        <begin position="143"/>
        <end position="144"/>
    </location>
    <ligand>
        <name>uridine</name>
        <dbReference type="ChEBI" id="CHEBI:16704"/>
    </ligand>
</feature>
<feature type="binding site" evidence="1">
    <location>
        <begin position="218"/>
        <end position="220"/>
    </location>
    <ligand>
        <name>uridine</name>
        <dbReference type="ChEBI" id="CHEBI:16704"/>
    </ligand>
</feature>
<feature type="sequence conflict" description="In Ref. 1; BAA07916." evidence="5" ref="1">
    <original>S</original>
    <variation>G</variation>
    <location>
        <position position="260"/>
    </location>
</feature>
<keyword id="KW-0903">Direct protein sequencing</keyword>
<keyword id="KW-0328">Glycosyltransferase</keyword>
<keyword id="KW-1185">Reference proteome</keyword>
<keyword id="KW-0808">Transferase</keyword>